<reference key="1">
    <citation type="submission" date="2005-01" db="EMBL/GenBank/DDBJ databases">
        <title>Genealogical relationships of banana cultivars inferred from chloroplast DNA sequence analysis.</title>
        <authorList>
            <person name="Swangpol S."/>
            <person name="Volkaert H.A."/>
            <person name="Sotto R.C."/>
            <person name="Seelanan T."/>
        </authorList>
    </citation>
    <scope>NUCLEOTIDE SEQUENCE [GENOMIC DNA]</scope>
</reference>
<geneLocation type="chloroplast"/>
<proteinExistence type="inferred from homology"/>
<evidence type="ECO:0000255" key="1">
    <source>
        <dbReference type="HAMAP-Rule" id="MF_01305"/>
    </source>
</evidence>
<dbReference type="EMBL" id="AY874841">
    <property type="protein sequence ID" value="AAX56771.1"/>
    <property type="molecule type" value="Genomic_DNA"/>
</dbReference>
<dbReference type="SMR" id="Q2THQ0"/>
<dbReference type="GO" id="GO:0009535">
    <property type="term" value="C:chloroplast thylakoid membrane"/>
    <property type="evidence" value="ECO:0007669"/>
    <property type="project" value="UniProtKB-SubCell"/>
</dbReference>
<dbReference type="GO" id="GO:0009539">
    <property type="term" value="C:photosystem II reaction center"/>
    <property type="evidence" value="ECO:0007669"/>
    <property type="project" value="InterPro"/>
</dbReference>
<dbReference type="GO" id="GO:0015979">
    <property type="term" value="P:photosynthesis"/>
    <property type="evidence" value="ECO:0007669"/>
    <property type="project" value="UniProtKB-UniRule"/>
</dbReference>
<dbReference type="Gene3D" id="6.10.250.2070">
    <property type="match status" value="1"/>
</dbReference>
<dbReference type="HAMAP" id="MF_01305">
    <property type="entry name" value="PSII_PsbJ"/>
    <property type="match status" value="1"/>
</dbReference>
<dbReference type="InterPro" id="IPR002682">
    <property type="entry name" value="PSII_PsbJ"/>
</dbReference>
<dbReference type="InterPro" id="IPR037267">
    <property type="entry name" value="PSII_PsbJ_sf"/>
</dbReference>
<dbReference type="NCBIfam" id="NF002722">
    <property type="entry name" value="PRK02565.1"/>
    <property type="match status" value="1"/>
</dbReference>
<dbReference type="PANTHER" id="PTHR34812">
    <property type="entry name" value="PHOTOSYSTEM II REACTION CENTER PROTEIN J"/>
    <property type="match status" value="1"/>
</dbReference>
<dbReference type="PANTHER" id="PTHR34812:SF3">
    <property type="entry name" value="PHOTOSYSTEM II REACTION CENTER PROTEIN J"/>
    <property type="match status" value="1"/>
</dbReference>
<dbReference type="Pfam" id="PF01788">
    <property type="entry name" value="PsbJ"/>
    <property type="match status" value="1"/>
</dbReference>
<dbReference type="SUPFAM" id="SSF161021">
    <property type="entry name" value="Photosystem II reaction center protein J, PsbJ"/>
    <property type="match status" value="1"/>
</dbReference>
<comment type="function">
    <text evidence="1">One of the components of the core complex of photosystem II (PSII). PSII is a light-driven water:plastoquinone oxidoreductase that uses light energy to abstract electrons from H(2)O, generating O(2) and a proton gradient subsequently used for ATP formation. It consists of a core antenna complex that captures photons, and an electron transfer chain that converts photonic excitation into a charge separation.</text>
</comment>
<comment type="subunit">
    <text evidence="1">PSII is composed of 1 copy each of membrane proteins PsbA, PsbB, PsbC, PsbD, PsbE, PsbF, PsbH, PsbI, PsbJ, PsbK, PsbL, PsbM, PsbT, PsbX, PsbY, PsbZ, Psb30/Ycf12, at least 3 peripheral proteins of the oxygen-evolving complex and a large number of cofactors. It forms dimeric complexes.</text>
</comment>
<comment type="subcellular location">
    <subcellularLocation>
        <location evidence="1">Plastid</location>
        <location evidence="1">Chloroplast thylakoid membrane</location>
        <topology evidence="1">Single-pass membrane protein</topology>
    </subcellularLocation>
</comment>
<comment type="similarity">
    <text evidence="1">Belongs to the PsbJ family.</text>
</comment>
<sequence>MADTTGRIPLWLVGTVTGIPVIGLIGVFFYGSYSGLGSSL</sequence>
<gene>
    <name evidence="1" type="primary">psbJ</name>
</gene>
<accession>Q2THQ0</accession>
<organism>
    <name type="scientific">Musa acuminata</name>
    <name type="common">Banana</name>
    <name type="synonym">Musa cavendishii</name>
    <dbReference type="NCBI Taxonomy" id="4641"/>
    <lineage>
        <taxon>Eukaryota</taxon>
        <taxon>Viridiplantae</taxon>
        <taxon>Streptophyta</taxon>
        <taxon>Embryophyta</taxon>
        <taxon>Tracheophyta</taxon>
        <taxon>Spermatophyta</taxon>
        <taxon>Magnoliopsida</taxon>
        <taxon>Liliopsida</taxon>
        <taxon>Zingiberales</taxon>
        <taxon>Musaceae</taxon>
        <taxon>Musa</taxon>
    </lineage>
</organism>
<protein>
    <recommendedName>
        <fullName evidence="1">Photosystem II reaction center protein J</fullName>
        <shortName evidence="1">PSII-J</shortName>
    </recommendedName>
</protein>
<keyword id="KW-0150">Chloroplast</keyword>
<keyword id="KW-0472">Membrane</keyword>
<keyword id="KW-0602">Photosynthesis</keyword>
<keyword id="KW-0604">Photosystem II</keyword>
<keyword id="KW-0934">Plastid</keyword>
<keyword id="KW-0674">Reaction center</keyword>
<keyword id="KW-0793">Thylakoid</keyword>
<keyword id="KW-0812">Transmembrane</keyword>
<keyword id="KW-1133">Transmembrane helix</keyword>
<name>PSBJ_MUSAC</name>
<feature type="chain" id="PRO_0000249579" description="Photosystem II reaction center protein J">
    <location>
        <begin position="1"/>
        <end position="40"/>
    </location>
</feature>
<feature type="transmembrane region" description="Helical" evidence="1">
    <location>
        <begin position="8"/>
        <end position="28"/>
    </location>
</feature>